<evidence type="ECO:0000255" key="1">
    <source>
        <dbReference type="HAMAP-Rule" id="MF_04053"/>
    </source>
</evidence>
<evidence type="ECO:0000256" key="2">
    <source>
        <dbReference type="SAM" id="MobiDB-lite"/>
    </source>
</evidence>
<evidence type="ECO:0000305" key="3"/>
<gene>
    <name evidence="1" type="primary">L2</name>
</gene>
<proteinExistence type="inferred from homology"/>
<name>CORE5_ADEM1</name>
<organism>
    <name type="scientific">Murine adenovirus A serotype 1</name>
    <name type="common">MAdV-1</name>
    <name type="synonym">Murine adenovirus 1</name>
    <dbReference type="NCBI Taxonomy" id="10530"/>
    <lineage>
        <taxon>Viruses</taxon>
        <taxon>Varidnaviria</taxon>
        <taxon>Bamfordvirae</taxon>
        <taxon>Preplasmiviricota</taxon>
        <taxon>Tectiliviricetes</taxon>
        <taxon>Rowavirales</taxon>
        <taxon>Adenoviridae</taxon>
        <taxon>Mastadenovirus</taxon>
        <taxon>Murine mastadenovirus A</taxon>
    </lineage>
</organism>
<feature type="chain" id="PRO_0000221910" description="Core-capsid bridging protein">
    <location>
        <begin position="1"/>
        <end position="228"/>
    </location>
</feature>
<feature type="region of interest" description="Disordered" evidence="2">
    <location>
        <begin position="146"/>
        <end position="177"/>
    </location>
</feature>
<feature type="compositionally biased region" description="Basic residues" evidence="2">
    <location>
        <begin position="155"/>
        <end position="167"/>
    </location>
</feature>
<feature type="compositionally biased region" description="Low complexity" evidence="2">
    <location>
        <begin position="168"/>
        <end position="177"/>
    </location>
</feature>
<keyword id="KW-0238">DNA-binding</keyword>
<keyword id="KW-1048">Host nucleus</keyword>
<keyword id="KW-0426">Late protein</keyword>
<keyword id="KW-0118">Viral capsid assembly</keyword>
<keyword id="KW-1188">Viral release from host cell</keyword>
<keyword id="KW-0946">Virion</keyword>
<sequence length="228" mass="25572">MEDSRVYLDRSNATPSYIPVTPQIPVPGLGHRRVKREHVQVDEEPTVQILIKRPKVEDEEVPIPIFPPLPPARDPVAAVAAAGGQIVRRRRRRVPGTAMGVDTVDVVLPVGVRYHPSIEAARPPAVPPPRAVPPVGVRYHPSIEVARPPAARISPPRRRRRRRRSPRPRATAAYRSSAEVVERRRRVAQTVPVVRYHPSIQVEPAVHPPLAPRLPVQMAYTRYHPTIH</sequence>
<organismHost>
    <name type="scientific">Mus musculus</name>
    <name type="common">Mouse</name>
    <dbReference type="NCBI Taxonomy" id="10090"/>
</organismHost>
<dbReference type="EMBL" id="U95843">
    <property type="protein sequence ID" value="AAB53757.1"/>
    <property type="molecule type" value="Genomic_DNA"/>
</dbReference>
<dbReference type="GO" id="GO:0044196">
    <property type="term" value="C:host cell nucleolus"/>
    <property type="evidence" value="ECO:0007669"/>
    <property type="project" value="UniProtKB-SubCell"/>
</dbReference>
<dbReference type="GO" id="GO:0044423">
    <property type="term" value="C:virion component"/>
    <property type="evidence" value="ECO:0007669"/>
    <property type="project" value="UniProtKB-UniRule"/>
</dbReference>
<dbReference type="GO" id="GO:0003677">
    <property type="term" value="F:DNA binding"/>
    <property type="evidence" value="ECO:0007669"/>
    <property type="project" value="UniProtKB-UniRule"/>
</dbReference>
<dbReference type="GO" id="GO:0019076">
    <property type="term" value="P:viral release from host cell"/>
    <property type="evidence" value="ECO:0007669"/>
    <property type="project" value="UniProtKB-UniRule"/>
</dbReference>
<dbReference type="HAMAP" id="MF_04053">
    <property type="entry name" value="ADV_CORE5"/>
    <property type="match status" value="1"/>
</dbReference>
<dbReference type="InterPro" id="IPR005608">
    <property type="entry name" value="Adeno_V"/>
</dbReference>
<dbReference type="Pfam" id="PF03910">
    <property type="entry name" value="Adeno_PV"/>
    <property type="match status" value="1"/>
</dbReference>
<comment type="function">
    <text evidence="1">Associates loosely with the viral DNA to form an outer shell around the nucleoprotein-DNA complex and links it with the capsid by binding the endosome lysis protein. Dissociates from the viral genome during entry. Might be involved in nuclear capsid assembly of the viral particles through its association with NPM1/nucleophosmin.</text>
</comment>
<comment type="subunit">
    <text evidence="1">Monomer. Homodimer. Exists in equilibrium between monomers and dimers in solution. Interacts with the histone-like nucleoprotein; this interactions bridge the virus core to the capsid. Interacts with core protein X; this interactions bridge the virus core to the capsid. Interacts with the endosome lysis protein VI; this interactions bridge the virus core to the capsid. Interacts with the peripentonal hexons. Interacts with host NPM1; this interaction might play a role in virus assembly.</text>
</comment>
<comment type="subcellular location">
    <subcellularLocation>
        <location evidence="1">Virion</location>
    </subcellularLocation>
    <subcellularLocation>
        <location evidence="1">Host nucleus</location>
        <location evidence="1">Host nucleolus</location>
    </subcellularLocation>
    <text evidence="1">Located inside the capsid (core). Present in 157 copies per virion. Localizes in the nucleoli during infection, then translocates from the nucleoli to the nucleoplasm as the infection progresses and is finally incorporated into the viral particles.</text>
</comment>
<comment type="induction">
    <text evidence="1">Expressed in the late phase of the viral replicative cycle.</text>
</comment>
<comment type="miscellaneous">
    <text evidence="1">All late proteins expressed from the major late promoter are produced by alternative splicing and alternative polyadenylation of the same gene giving rise to non-overlapping ORFs. A leader sequence is present in the N-terminus of all these mRNAs and is recognized by the viral shutoff protein to provide expression although conventional translation via ribosome scanning from the cap has been shut off in the host cell.</text>
</comment>
<comment type="miscellaneous">
    <text evidence="1">This protein is only encoded by mastadenoviruses, and may therefore play a role in mammals tropism.</text>
</comment>
<comment type="similarity">
    <text evidence="1 3">Belongs to the adenoviridae core-capsid bridging protein family.</text>
</comment>
<reference key="1">
    <citation type="submission" date="1997-05" db="EMBL/GenBank/DDBJ databases">
        <authorList>
            <person name="Meissner J.D."/>
            <person name="Hirsch G.N."/>
            <person name="Larue E.A."/>
            <person name="Fulcher R.A."/>
            <person name="Spindler K.R."/>
        </authorList>
    </citation>
    <scope>NUCLEOTIDE SEQUENCE [GENOMIC DNA]</scope>
</reference>
<accession>O10442</accession>
<protein>
    <recommendedName>
        <fullName evidence="1">Core-capsid bridging protein</fullName>
    </recommendedName>
    <alternativeName>
        <fullName evidence="1">Core protein V</fullName>
    </alternativeName>
</protein>